<feature type="chain" id="PRO_1000131190" description="PqqA binding protein">
    <location>
        <begin position="1"/>
        <end position="91"/>
    </location>
</feature>
<accession>B1JDZ9</accession>
<sequence length="91" mass="10373">MSFDRKQVPNWRPGYRFQYEPAQKGHVLLYPEGMIKLNDSASLIGGLIDGKRDVNAIITELEQQFPGVPEVADDIEQFMEVARGEHWITLA</sequence>
<evidence type="ECO:0000255" key="1">
    <source>
        <dbReference type="HAMAP-Rule" id="MF_00655"/>
    </source>
</evidence>
<comment type="function">
    <text evidence="1">Functions as a PqqA binding protein and presents PqqA to PqqE, in the pyrroloquinoline quinone (PQQ) biosynthetic pathway.</text>
</comment>
<comment type="pathway">
    <text evidence="1">Cofactor biosynthesis; pyrroloquinoline quinone biosynthesis.</text>
</comment>
<comment type="subunit">
    <text evidence="1">Monomer. Interacts with PqqE.</text>
</comment>
<comment type="similarity">
    <text evidence="1">Belongs to the PqqD family.</text>
</comment>
<gene>
    <name evidence="1" type="primary">pqqD</name>
    <name type="ordered locus">PputW619_4826</name>
</gene>
<protein>
    <recommendedName>
        <fullName evidence="1">PqqA binding protein</fullName>
    </recommendedName>
    <alternativeName>
        <fullName evidence="1">Coenzyme PQQ synthesis protein D</fullName>
    </alternativeName>
    <alternativeName>
        <fullName evidence="1">Pyrroloquinoline quinone biosynthesis protein D</fullName>
    </alternativeName>
</protein>
<organism>
    <name type="scientific">Pseudomonas putida (strain W619)</name>
    <dbReference type="NCBI Taxonomy" id="390235"/>
    <lineage>
        <taxon>Bacteria</taxon>
        <taxon>Pseudomonadati</taxon>
        <taxon>Pseudomonadota</taxon>
        <taxon>Gammaproteobacteria</taxon>
        <taxon>Pseudomonadales</taxon>
        <taxon>Pseudomonadaceae</taxon>
        <taxon>Pseudomonas</taxon>
    </lineage>
</organism>
<proteinExistence type="inferred from homology"/>
<keyword id="KW-0884">PQQ biosynthesis</keyword>
<reference key="1">
    <citation type="submission" date="2008-02" db="EMBL/GenBank/DDBJ databases">
        <title>Complete sequence of Pseudomonas putida W619.</title>
        <authorList>
            <person name="Copeland A."/>
            <person name="Lucas S."/>
            <person name="Lapidus A."/>
            <person name="Barry K."/>
            <person name="Detter J.C."/>
            <person name="Glavina del Rio T."/>
            <person name="Dalin E."/>
            <person name="Tice H."/>
            <person name="Pitluck S."/>
            <person name="Chain P."/>
            <person name="Malfatti S."/>
            <person name="Shin M."/>
            <person name="Vergez L."/>
            <person name="Schmutz J."/>
            <person name="Larimer F."/>
            <person name="Land M."/>
            <person name="Hauser L."/>
            <person name="Kyrpides N."/>
            <person name="Kim E."/>
            <person name="Taghavi S."/>
            <person name="Vangronsveld D."/>
            <person name="van der Lelie D."/>
            <person name="Richardson P."/>
        </authorList>
    </citation>
    <scope>NUCLEOTIDE SEQUENCE [LARGE SCALE GENOMIC DNA]</scope>
    <source>
        <strain>W619</strain>
    </source>
</reference>
<name>PQQD_PSEPW</name>
<dbReference type="EMBL" id="CP000949">
    <property type="protein sequence ID" value="ACA75302.1"/>
    <property type="molecule type" value="Genomic_DNA"/>
</dbReference>
<dbReference type="SMR" id="B1JDZ9"/>
<dbReference type="STRING" id="390235.PputW619_4826"/>
<dbReference type="KEGG" id="ppw:PputW619_4826"/>
<dbReference type="eggNOG" id="ENOG5032Z81">
    <property type="taxonomic scope" value="Bacteria"/>
</dbReference>
<dbReference type="HOGENOM" id="CLU_163864_2_1_6"/>
<dbReference type="OrthoDB" id="7356791at2"/>
<dbReference type="UniPathway" id="UPA00539"/>
<dbReference type="GO" id="GO:0048038">
    <property type="term" value="F:quinone binding"/>
    <property type="evidence" value="ECO:0007669"/>
    <property type="project" value="InterPro"/>
</dbReference>
<dbReference type="GO" id="GO:0018189">
    <property type="term" value="P:pyrroloquinoline quinone biosynthetic process"/>
    <property type="evidence" value="ECO:0007669"/>
    <property type="project" value="UniProtKB-UniRule"/>
</dbReference>
<dbReference type="Gene3D" id="1.10.10.1150">
    <property type="entry name" value="Coenzyme PQQ synthesis protein D (PqqD)"/>
    <property type="match status" value="1"/>
</dbReference>
<dbReference type="HAMAP" id="MF_00655">
    <property type="entry name" value="PQQ_syn_PqqD"/>
    <property type="match status" value="1"/>
</dbReference>
<dbReference type="InterPro" id="IPR008792">
    <property type="entry name" value="PQQD"/>
</dbReference>
<dbReference type="InterPro" id="IPR022479">
    <property type="entry name" value="PqqD_bac"/>
</dbReference>
<dbReference type="InterPro" id="IPR041881">
    <property type="entry name" value="PqqD_sf"/>
</dbReference>
<dbReference type="NCBIfam" id="TIGR03859">
    <property type="entry name" value="PQQ_PqqD"/>
    <property type="match status" value="1"/>
</dbReference>
<dbReference type="NCBIfam" id="NF002535">
    <property type="entry name" value="PRK02079.1"/>
    <property type="match status" value="1"/>
</dbReference>
<dbReference type="Pfam" id="PF05402">
    <property type="entry name" value="PqqD"/>
    <property type="match status" value="1"/>
</dbReference>